<evidence type="ECO:0000255" key="1">
    <source>
        <dbReference type="HAMAP-Rule" id="MF_00082"/>
    </source>
</evidence>
<protein>
    <recommendedName>
        <fullName evidence="1">Acetylglutamate kinase</fullName>
        <ecNumber evidence="1">2.7.2.8</ecNumber>
    </recommendedName>
    <alternativeName>
        <fullName evidence="1">N-acetyl-L-glutamate 5-phosphotransferase</fullName>
    </alternativeName>
    <alternativeName>
        <fullName evidence="1">NAG kinase</fullName>
        <shortName evidence="1">NAGK</shortName>
    </alternativeName>
</protein>
<proteinExistence type="inferred from homology"/>
<accession>Q60382</accession>
<reference key="1">
    <citation type="journal article" date="1996" name="Science">
        <title>Complete genome sequence of the methanogenic archaeon, Methanococcus jannaschii.</title>
        <authorList>
            <person name="Bult C.J."/>
            <person name="White O."/>
            <person name="Olsen G.J."/>
            <person name="Zhou L."/>
            <person name="Fleischmann R.D."/>
            <person name="Sutton G.G."/>
            <person name="Blake J.A."/>
            <person name="FitzGerald L.M."/>
            <person name="Clayton R.A."/>
            <person name="Gocayne J.D."/>
            <person name="Kerlavage A.R."/>
            <person name="Dougherty B.A."/>
            <person name="Tomb J.-F."/>
            <person name="Adams M.D."/>
            <person name="Reich C.I."/>
            <person name="Overbeek R."/>
            <person name="Kirkness E.F."/>
            <person name="Weinstock K.G."/>
            <person name="Merrick J.M."/>
            <person name="Glodek A."/>
            <person name="Scott J.L."/>
            <person name="Geoghagen N.S.M."/>
            <person name="Weidman J.F."/>
            <person name="Fuhrmann J.L."/>
            <person name="Nguyen D."/>
            <person name="Utterback T.R."/>
            <person name="Kelley J.M."/>
            <person name="Peterson J.D."/>
            <person name="Sadow P.W."/>
            <person name="Hanna M.C."/>
            <person name="Cotton M.D."/>
            <person name="Roberts K.M."/>
            <person name="Hurst M.A."/>
            <person name="Kaine B.P."/>
            <person name="Borodovsky M."/>
            <person name="Klenk H.-P."/>
            <person name="Fraser C.M."/>
            <person name="Smith H.O."/>
            <person name="Woese C.R."/>
            <person name="Venter J.C."/>
        </authorList>
    </citation>
    <scope>NUCLEOTIDE SEQUENCE [LARGE SCALE GENOMIC DNA]</scope>
    <source>
        <strain>ATCC 43067 / DSM 2661 / JAL-1 / JCM 10045 / NBRC 100440</strain>
    </source>
</reference>
<feature type="chain" id="PRO_0000112694" description="Acetylglutamate kinase">
    <location>
        <begin position="1"/>
        <end position="300"/>
    </location>
</feature>
<feature type="binding site" evidence="1">
    <location>
        <begin position="68"/>
        <end position="69"/>
    </location>
    <ligand>
        <name>substrate</name>
    </ligand>
</feature>
<feature type="binding site" evidence="1">
    <location>
        <position position="90"/>
    </location>
    <ligand>
        <name>substrate</name>
    </ligand>
</feature>
<feature type="binding site" evidence="1">
    <location>
        <position position="194"/>
    </location>
    <ligand>
        <name>substrate</name>
    </ligand>
</feature>
<feature type="site" description="Transition state stabilizer" evidence="1">
    <location>
        <position position="33"/>
    </location>
</feature>
<feature type="site" description="Transition state stabilizer" evidence="1">
    <location>
        <position position="257"/>
    </location>
</feature>
<sequence length="300" mass="32725">MGMDMIEMIEKAEILMEALPFIQKFYGKIFVIKYGGHAMIDEKAKNWTAQDVVLLKYVGINPVVVHGGGPEINKAMEKMGKKPEFVHGLRVTDEETLDIVEMVLAGKINGDIVSKLSKFGGKAVGLSGKSGRIILAKKKLKKIKTEKGEEIEVDLGRVGETVEVNTELLEILINNGYIPVVSPIGLDEKGEAYNLNADTVAGDIAGALKAEKLILITDVDGIMDDINNPETLHRKLTASELKEMIEDGRIKGGMIPKAESALYALEHGVKSVHIINGKIPHALLLEIFTEEGIGTMITRD</sequence>
<comment type="function">
    <text evidence="1">Catalyzes the ATP-dependent phosphorylation of N-acetyl-L-glutamate.</text>
</comment>
<comment type="catalytic activity">
    <reaction evidence="1">
        <text>N-acetyl-L-glutamate + ATP = N-acetyl-L-glutamyl 5-phosphate + ADP</text>
        <dbReference type="Rhea" id="RHEA:14629"/>
        <dbReference type="ChEBI" id="CHEBI:30616"/>
        <dbReference type="ChEBI" id="CHEBI:44337"/>
        <dbReference type="ChEBI" id="CHEBI:57936"/>
        <dbReference type="ChEBI" id="CHEBI:456216"/>
        <dbReference type="EC" id="2.7.2.8"/>
    </reaction>
</comment>
<comment type="pathway">
    <text evidence="1">Amino-acid biosynthesis; L-arginine biosynthesis; N(2)-acetyl-L-ornithine from L-glutamate: step 2/4.</text>
</comment>
<comment type="subcellular location">
    <subcellularLocation>
        <location evidence="1">Cytoplasm</location>
    </subcellularLocation>
</comment>
<comment type="similarity">
    <text evidence="1">Belongs to the acetylglutamate kinase family. ArgB subfamily.</text>
</comment>
<gene>
    <name evidence="1" type="primary">argB</name>
    <name type="ordered locus">MJ0069</name>
</gene>
<name>ARGB_METJA</name>
<organism>
    <name type="scientific">Methanocaldococcus jannaschii (strain ATCC 43067 / DSM 2661 / JAL-1 / JCM 10045 / NBRC 100440)</name>
    <name type="common">Methanococcus jannaschii</name>
    <dbReference type="NCBI Taxonomy" id="243232"/>
    <lineage>
        <taxon>Archaea</taxon>
        <taxon>Methanobacteriati</taxon>
        <taxon>Methanobacteriota</taxon>
        <taxon>Methanomada group</taxon>
        <taxon>Methanococci</taxon>
        <taxon>Methanococcales</taxon>
        <taxon>Methanocaldococcaceae</taxon>
        <taxon>Methanocaldococcus</taxon>
    </lineage>
</organism>
<keyword id="KW-0028">Amino-acid biosynthesis</keyword>
<keyword id="KW-0055">Arginine biosynthesis</keyword>
<keyword id="KW-0067">ATP-binding</keyword>
<keyword id="KW-0963">Cytoplasm</keyword>
<keyword id="KW-0418">Kinase</keyword>
<keyword id="KW-0547">Nucleotide-binding</keyword>
<keyword id="KW-1185">Reference proteome</keyword>
<keyword id="KW-0808">Transferase</keyword>
<dbReference type="EC" id="2.7.2.8" evidence="1"/>
<dbReference type="EMBL" id="L77117">
    <property type="protein sequence ID" value="AAB98048.1"/>
    <property type="molecule type" value="Genomic_DNA"/>
</dbReference>
<dbReference type="PIR" id="E64308">
    <property type="entry name" value="E64308"/>
</dbReference>
<dbReference type="SMR" id="Q60382"/>
<dbReference type="FunCoup" id="Q60382">
    <property type="interactions" value="140"/>
</dbReference>
<dbReference type="STRING" id="243232.MJ_0069"/>
<dbReference type="PaxDb" id="243232-MJ_0069"/>
<dbReference type="EnsemblBacteria" id="AAB98048">
    <property type="protein sequence ID" value="AAB98048"/>
    <property type="gene ID" value="MJ_0069"/>
</dbReference>
<dbReference type="KEGG" id="mja:MJ_0069"/>
<dbReference type="eggNOG" id="arCOG00862">
    <property type="taxonomic scope" value="Archaea"/>
</dbReference>
<dbReference type="HOGENOM" id="CLU_053680_0_0_2"/>
<dbReference type="InParanoid" id="Q60382"/>
<dbReference type="OrthoDB" id="6816at2157"/>
<dbReference type="PhylomeDB" id="Q60382"/>
<dbReference type="UniPathway" id="UPA00068">
    <property type="reaction ID" value="UER00107"/>
</dbReference>
<dbReference type="Proteomes" id="UP000000805">
    <property type="component" value="Chromosome"/>
</dbReference>
<dbReference type="GO" id="GO:0005737">
    <property type="term" value="C:cytoplasm"/>
    <property type="evidence" value="ECO:0007669"/>
    <property type="project" value="UniProtKB-SubCell"/>
</dbReference>
<dbReference type="GO" id="GO:0003991">
    <property type="term" value="F:acetylglutamate kinase activity"/>
    <property type="evidence" value="ECO:0000318"/>
    <property type="project" value="GO_Central"/>
</dbReference>
<dbReference type="GO" id="GO:0005524">
    <property type="term" value="F:ATP binding"/>
    <property type="evidence" value="ECO:0007669"/>
    <property type="project" value="UniProtKB-UniRule"/>
</dbReference>
<dbReference type="GO" id="GO:0042450">
    <property type="term" value="P:arginine biosynthetic process via ornithine"/>
    <property type="evidence" value="ECO:0007669"/>
    <property type="project" value="UniProtKB-UniRule"/>
</dbReference>
<dbReference type="GO" id="GO:0006526">
    <property type="term" value="P:L-arginine biosynthetic process"/>
    <property type="evidence" value="ECO:0000318"/>
    <property type="project" value="GO_Central"/>
</dbReference>
<dbReference type="CDD" id="cd04250">
    <property type="entry name" value="AAK_NAGK-C"/>
    <property type="match status" value="1"/>
</dbReference>
<dbReference type="FunFam" id="3.40.1160.10:FF:000004">
    <property type="entry name" value="Acetylglutamate kinase"/>
    <property type="match status" value="1"/>
</dbReference>
<dbReference type="Gene3D" id="3.40.1160.10">
    <property type="entry name" value="Acetylglutamate kinase-like"/>
    <property type="match status" value="1"/>
</dbReference>
<dbReference type="HAMAP" id="MF_00082">
    <property type="entry name" value="ArgB"/>
    <property type="match status" value="1"/>
</dbReference>
<dbReference type="InterPro" id="IPR036393">
    <property type="entry name" value="AceGlu_kinase-like_sf"/>
</dbReference>
<dbReference type="InterPro" id="IPR004662">
    <property type="entry name" value="AcgluKinase_fam"/>
</dbReference>
<dbReference type="InterPro" id="IPR037528">
    <property type="entry name" value="ArgB"/>
</dbReference>
<dbReference type="InterPro" id="IPR001048">
    <property type="entry name" value="Asp/Glu/Uridylate_kinase"/>
</dbReference>
<dbReference type="InterPro" id="IPR041727">
    <property type="entry name" value="NAGK-C"/>
</dbReference>
<dbReference type="NCBIfam" id="TIGR00761">
    <property type="entry name" value="argB"/>
    <property type="match status" value="1"/>
</dbReference>
<dbReference type="PANTHER" id="PTHR23342">
    <property type="entry name" value="N-ACETYLGLUTAMATE SYNTHASE"/>
    <property type="match status" value="1"/>
</dbReference>
<dbReference type="PANTHER" id="PTHR23342:SF0">
    <property type="entry name" value="N-ACETYLGLUTAMATE SYNTHASE, MITOCHONDRIAL"/>
    <property type="match status" value="1"/>
</dbReference>
<dbReference type="Pfam" id="PF00696">
    <property type="entry name" value="AA_kinase"/>
    <property type="match status" value="1"/>
</dbReference>
<dbReference type="PIRSF" id="PIRSF000728">
    <property type="entry name" value="NAGK"/>
    <property type="match status" value="1"/>
</dbReference>
<dbReference type="SUPFAM" id="SSF53633">
    <property type="entry name" value="Carbamate kinase-like"/>
    <property type="match status" value="1"/>
</dbReference>